<keyword id="KW-0067">ATP-binding</keyword>
<keyword id="KW-0963">Cytoplasm</keyword>
<keyword id="KW-0227">DNA damage</keyword>
<keyword id="KW-0234">DNA repair</keyword>
<keyword id="KW-0235">DNA replication</keyword>
<keyword id="KW-0238">DNA-binding</keyword>
<keyword id="KW-0547">Nucleotide-binding</keyword>
<keyword id="KW-0742">SOS response</keyword>
<feature type="chain" id="PRO_1000048514" description="DNA replication and repair protein RecF">
    <location>
        <begin position="1"/>
        <end position="361"/>
    </location>
</feature>
<feature type="binding site" evidence="1">
    <location>
        <begin position="30"/>
        <end position="37"/>
    </location>
    <ligand>
        <name>ATP</name>
        <dbReference type="ChEBI" id="CHEBI:30616"/>
    </ligand>
</feature>
<protein>
    <recommendedName>
        <fullName evidence="1">DNA replication and repair protein RecF</fullName>
    </recommendedName>
</protein>
<dbReference type="EMBL" id="CP000246">
    <property type="protein sequence ID" value="ABG84696.1"/>
    <property type="molecule type" value="Genomic_DNA"/>
</dbReference>
<dbReference type="RefSeq" id="WP_003450989.1">
    <property type="nucleotide sequence ID" value="NC_008261.1"/>
</dbReference>
<dbReference type="SMR" id="Q0TV61"/>
<dbReference type="STRING" id="195103.CPF_0004"/>
<dbReference type="PaxDb" id="195103-CPF_0004"/>
<dbReference type="GeneID" id="93000721"/>
<dbReference type="KEGG" id="cpf:CPF_0004"/>
<dbReference type="eggNOG" id="COG1195">
    <property type="taxonomic scope" value="Bacteria"/>
</dbReference>
<dbReference type="HOGENOM" id="CLU_040267_0_1_9"/>
<dbReference type="Proteomes" id="UP000001823">
    <property type="component" value="Chromosome"/>
</dbReference>
<dbReference type="GO" id="GO:0005737">
    <property type="term" value="C:cytoplasm"/>
    <property type="evidence" value="ECO:0007669"/>
    <property type="project" value="UniProtKB-SubCell"/>
</dbReference>
<dbReference type="GO" id="GO:0005524">
    <property type="term" value="F:ATP binding"/>
    <property type="evidence" value="ECO:0007669"/>
    <property type="project" value="UniProtKB-UniRule"/>
</dbReference>
<dbReference type="GO" id="GO:0003697">
    <property type="term" value="F:single-stranded DNA binding"/>
    <property type="evidence" value="ECO:0007669"/>
    <property type="project" value="UniProtKB-UniRule"/>
</dbReference>
<dbReference type="GO" id="GO:0006260">
    <property type="term" value="P:DNA replication"/>
    <property type="evidence" value="ECO:0007669"/>
    <property type="project" value="UniProtKB-UniRule"/>
</dbReference>
<dbReference type="GO" id="GO:0000731">
    <property type="term" value="P:DNA synthesis involved in DNA repair"/>
    <property type="evidence" value="ECO:0007669"/>
    <property type="project" value="TreeGrafter"/>
</dbReference>
<dbReference type="GO" id="GO:0006302">
    <property type="term" value="P:double-strand break repair"/>
    <property type="evidence" value="ECO:0007669"/>
    <property type="project" value="TreeGrafter"/>
</dbReference>
<dbReference type="GO" id="GO:0009432">
    <property type="term" value="P:SOS response"/>
    <property type="evidence" value="ECO:0007669"/>
    <property type="project" value="UniProtKB-UniRule"/>
</dbReference>
<dbReference type="CDD" id="cd03242">
    <property type="entry name" value="ABC_RecF"/>
    <property type="match status" value="1"/>
</dbReference>
<dbReference type="Gene3D" id="3.40.50.300">
    <property type="entry name" value="P-loop containing nucleotide triphosphate hydrolases"/>
    <property type="match status" value="1"/>
</dbReference>
<dbReference type="Gene3D" id="1.20.1050.90">
    <property type="entry name" value="RecF/RecN/SMC, N-terminal domain"/>
    <property type="match status" value="1"/>
</dbReference>
<dbReference type="HAMAP" id="MF_00365">
    <property type="entry name" value="RecF"/>
    <property type="match status" value="1"/>
</dbReference>
<dbReference type="InterPro" id="IPR001238">
    <property type="entry name" value="DNA-binding_RecF"/>
</dbReference>
<dbReference type="InterPro" id="IPR018078">
    <property type="entry name" value="DNA-binding_RecF_CS"/>
</dbReference>
<dbReference type="InterPro" id="IPR027417">
    <property type="entry name" value="P-loop_NTPase"/>
</dbReference>
<dbReference type="InterPro" id="IPR003395">
    <property type="entry name" value="RecF/RecN/SMC_N"/>
</dbReference>
<dbReference type="InterPro" id="IPR042174">
    <property type="entry name" value="RecF_2"/>
</dbReference>
<dbReference type="NCBIfam" id="TIGR00611">
    <property type="entry name" value="recf"/>
    <property type="match status" value="1"/>
</dbReference>
<dbReference type="PANTHER" id="PTHR32182">
    <property type="entry name" value="DNA REPLICATION AND REPAIR PROTEIN RECF"/>
    <property type="match status" value="1"/>
</dbReference>
<dbReference type="PANTHER" id="PTHR32182:SF0">
    <property type="entry name" value="DNA REPLICATION AND REPAIR PROTEIN RECF"/>
    <property type="match status" value="1"/>
</dbReference>
<dbReference type="Pfam" id="PF02463">
    <property type="entry name" value="SMC_N"/>
    <property type="match status" value="1"/>
</dbReference>
<dbReference type="SUPFAM" id="SSF52540">
    <property type="entry name" value="P-loop containing nucleoside triphosphate hydrolases"/>
    <property type="match status" value="1"/>
</dbReference>
<dbReference type="PROSITE" id="PS00617">
    <property type="entry name" value="RECF_1"/>
    <property type="match status" value="1"/>
</dbReference>
<dbReference type="PROSITE" id="PS00618">
    <property type="entry name" value="RECF_2"/>
    <property type="match status" value="1"/>
</dbReference>
<organism>
    <name type="scientific">Clostridium perfringens (strain ATCC 13124 / DSM 756 / JCM 1290 / NCIMB 6125 / NCTC 8237 / Type A)</name>
    <dbReference type="NCBI Taxonomy" id="195103"/>
    <lineage>
        <taxon>Bacteria</taxon>
        <taxon>Bacillati</taxon>
        <taxon>Bacillota</taxon>
        <taxon>Clostridia</taxon>
        <taxon>Eubacteriales</taxon>
        <taxon>Clostridiaceae</taxon>
        <taxon>Clostridium</taxon>
    </lineage>
</organism>
<evidence type="ECO:0000255" key="1">
    <source>
        <dbReference type="HAMAP-Rule" id="MF_00365"/>
    </source>
</evidence>
<gene>
    <name evidence="1" type="primary">recF</name>
    <name type="ordered locus">CPF_0004</name>
</gene>
<accession>Q0TV61</accession>
<name>RECF_CLOP1</name>
<comment type="function">
    <text evidence="1">The RecF protein is involved in DNA metabolism; it is required for DNA replication and normal SOS inducibility. RecF binds preferentially to single-stranded, linear DNA. It also seems to bind ATP.</text>
</comment>
<comment type="subcellular location">
    <subcellularLocation>
        <location evidence="1">Cytoplasm</location>
    </subcellularLocation>
</comment>
<comment type="similarity">
    <text evidence="1">Belongs to the RecF family.</text>
</comment>
<reference key="1">
    <citation type="journal article" date="2006" name="Genome Res.">
        <title>Skewed genomic variability in strains of the toxigenic bacterial pathogen, Clostridium perfringens.</title>
        <authorList>
            <person name="Myers G.S.A."/>
            <person name="Rasko D.A."/>
            <person name="Cheung J.K."/>
            <person name="Ravel J."/>
            <person name="Seshadri R."/>
            <person name="DeBoy R.T."/>
            <person name="Ren Q."/>
            <person name="Varga J."/>
            <person name="Awad M.M."/>
            <person name="Brinkac L.M."/>
            <person name="Daugherty S.C."/>
            <person name="Haft D.H."/>
            <person name="Dodson R.J."/>
            <person name="Madupu R."/>
            <person name="Nelson W.C."/>
            <person name="Rosovitz M.J."/>
            <person name="Sullivan S.A."/>
            <person name="Khouri H."/>
            <person name="Dimitrov G.I."/>
            <person name="Watkins K.L."/>
            <person name="Mulligan S."/>
            <person name="Benton J."/>
            <person name="Radune D."/>
            <person name="Fisher D.J."/>
            <person name="Atkins H.S."/>
            <person name="Hiscox T."/>
            <person name="Jost B.H."/>
            <person name="Billington S.J."/>
            <person name="Songer J.G."/>
            <person name="McClane B.A."/>
            <person name="Titball R.W."/>
            <person name="Rood J.I."/>
            <person name="Melville S.B."/>
            <person name="Paulsen I.T."/>
        </authorList>
    </citation>
    <scope>NUCLEOTIDE SEQUENCE [LARGE SCALE GENOMIC DNA]</scope>
    <source>
        <strain>ATCC 13124 / DSM 756 / JCM 1290 / NCIMB 6125 / NCTC 8237 / S 107 / Type A</strain>
    </source>
</reference>
<sequence>MYIKSLQLINYRNYENLSIKLCPNVNVFIGDNAQGKTNVIEAIYYCGFAKSHRTNRDKELIEWNKDRAFIRLDVHKDRLDKIIDVNILKDGKKAISINSIKISKIGELIGTFNVVMFSPEDLKIVKESPGIRRRFIDMELSQLNKRYYHNLVQYNKVLHERNLVLKNKNINEEMLDIYDIQLAQYGENIIKTRLKYIEQLNKYSKEIHKEITSGKEEIEFKYISTVKDLDNIKDSMIKLLEQNRKKDIDKRATSIGPHRDDFNIYLNNIDAKIYGSQGQQRTSVLTIKFASLKIIKEITGEYPVLLLDDVLSELDFNRKRYVLTSIKNIQTVITCTGIEDLTSYLDENSKVFRVINGRIQC</sequence>
<proteinExistence type="inferred from homology"/>